<proteinExistence type="inferred from homology"/>
<dbReference type="EC" id="2.1.3.15" evidence="1"/>
<dbReference type="EMBL" id="CP000097">
    <property type="protein sequence ID" value="ABB25759.1"/>
    <property type="molecule type" value="Genomic_DNA"/>
</dbReference>
<dbReference type="RefSeq" id="WP_011359599.1">
    <property type="nucleotide sequence ID" value="NC_007513.1"/>
</dbReference>
<dbReference type="SMR" id="Q3AYR8"/>
<dbReference type="STRING" id="316279.Syncc9902_0793"/>
<dbReference type="KEGG" id="sye:Syncc9902_0793"/>
<dbReference type="eggNOG" id="COG0777">
    <property type="taxonomic scope" value="Bacteria"/>
</dbReference>
<dbReference type="HOGENOM" id="CLU_015486_1_1_3"/>
<dbReference type="OrthoDB" id="9772975at2"/>
<dbReference type="UniPathway" id="UPA00655">
    <property type="reaction ID" value="UER00711"/>
</dbReference>
<dbReference type="Proteomes" id="UP000002712">
    <property type="component" value="Chromosome"/>
</dbReference>
<dbReference type="GO" id="GO:0009317">
    <property type="term" value="C:acetyl-CoA carboxylase complex"/>
    <property type="evidence" value="ECO:0007669"/>
    <property type="project" value="InterPro"/>
</dbReference>
<dbReference type="GO" id="GO:0003989">
    <property type="term" value="F:acetyl-CoA carboxylase activity"/>
    <property type="evidence" value="ECO:0007669"/>
    <property type="project" value="InterPro"/>
</dbReference>
<dbReference type="GO" id="GO:0005524">
    <property type="term" value="F:ATP binding"/>
    <property type="evidence" value="ECO:0007669"/>
    <property type="project" value="UniProtKB-KW"/>
</dbReference>
<dbReference type="GO" id="GO:0016743">
    <property type="term" value="F:carboxyl- or carbamoyltransferase activity"/>
    <property type="evidence" value="ECO:0007669"/>
    <property type="project" value="UniProtKB-UniRule"/>
</dbReference>
<dbReference type="GO" id="GO:0008270">
    <property type="term" value="F:zinc ion binding"/>
    <property type="evidence" value="ECO:0007669"/>
    <property type="project" value="UniProtKB-UniRule"/>
</dbReference>
<dbReference type="GO" id="GO:0006633">
    <property type="term" value="P:fatty acid biosynthetic process"/>
    <property type="evidence" value="ECO:0007669"/>
    <property type="project" value="UniProtKB-KW"/>
</dbReference>
<dbReference type="GO" id="GO:2001295">
    <property type="term" value="P:malonyl-CoA biosynthetic process"/>
    <property type="evidence" value="ECO:0007669"/>
    <property type="project" value="UniProtKB-UniRule"/>
</dbReference>
<dbReference type="Gene3D" id="3.90.226.10">
    <property type="entry name" value="2-enoyl-CoA Hydratase, Chain A, domain 1"/>
    <property type="match status" value="1"/>
</dbReference>
<dbReference type="HAMAP" id="MF_01395">
    <property type="entry name" value="AcetylCoA_CT_beta"/>
    <property type="match status" value="1"/>
</dbReference>
<dbReference type="InterPro" id="IPR034733">
    <property type="entry name" value="AcCoA_carboxyl_beta"/>
</dbReference>
<dbReference type="InterPro" id="IPR000438">
    <property type="entry name" value="Acetyl_CoA_COase_Trfase_b_su"/>
</dbReference>
<dbReference type="InterPro" id="IPR029045">
    <property type="entry name" value="ClpP/crotonase-like_dom_sf"/>
</dbReference>
<dbReference type="InterPro" id="IPR011762">
    <property type="entry name" value="COA_CT_N"/>
</dbReference>
<dbReference type="InterPro" id="IPR041010">
    <property type="entry name" value="Znf-ACC"/>
</dbReference>
<dbReference type="NCBIfam" id="TIGR00515">
    <property type="entry name" value="accD"/>
    <property type="match status" value="1"/>
</dbReference>
<dbReference type="PANTHER" id="PTHR42995">
    <property type="entry name" value="ACETYL-COENZYME A CARBOXYLASE CARBOXYL TRANSFERASE SUBUNIT BETA, CHLOROPLASTIC"/>
    <property type="match status" value="1"/>
</dbReference>
<dbReference type="PANTHER" id="PTHR42995:SF5">
    <property type="entry name" value="ACETYL-COENZYME A CARBOXYLASE CARBOXYL TRANSFERASE SUBUNIT BETA, CHLOROPLASTIC"/>
    <property type="match status" value="1"/>
</dbReference>
<dbReference type="Pfam" id="PF01039">
    <property type="entry name" value="Carboxyl_trans"/>
    <property type="match status" value="1"/>
</dbReference>
<dbReference type="Pfam" id="PF17848">
    <property type="entry name" value="Zn_ribbon_ACC"/>
    <property type="match status" value="1"/>
</dbReference>
<dbReference type="PRINTS" id="PR01070">
    <property type="entry name" value="ACCCTRFRASEB"/>
</dbReference>
<dbReference type="SUPFAM" id="SSF52096">
    <property type="entry name" value="ClpP/crotonase"/>
    <property type="match status" value="1"/>
</dbReference>
<dbReference type="PROSITE" id="PS50980">
    <property type="entry name" value="COA_CT_NTER"/>
    <property type="match status" value="1"/>
</dbReference>
<feature type="chain" id="PRO_0000359076" description="Acetyl-coenzyme A carboxylase carboxyl transferase subunit beta">
    <location>
        <begin position="1"/>
        <end position="293"/>
    </location>
</feature>
<feature type="domain" description="CoA carboxyltransferase N-terminal" evidence="2">
    <location>
        <begin position="29"/>
        <end position="293"/>
    </location>
</feature>
<feature type="zinc finger region" description="C4-type" evidence="1">
    <location>
        <begin position="33"/>
        <end position="55"/>
    </location>
</feature>
<feature type="binding site" evidence="1">
    <location>
        <position position="33"/>
    </location>
    <ligand>
        <name>Zn(2+)</name>
        <dbReference type="ChEBI" id="CHEBI:29105"/>
    </ligand>
</feature>
<feature type="binding site" evidence="1">
    <location>
        <position position="36"/>
    </location>
    <ligand>
        <name>Zn(2+)</name>
        <dbReference type="ChEBI" id="CHEBI:29105"/>
    </ligand>
</feature>
<feature type="binding site" evidence="1">
    <location>
        <position position="52"/>
    </location>
    <ligand>
        <name>Zn(2+)</name>
        <dbReference type="ChEBI" id="CHEBI:29105"/>
    </ligand>
</feature>
<feature type="binding site" evidence="1">
    <location>
        <position position="55"/>
    </location>
    <ligand>
        <name>Zn(2+)</name>
        <dbReference type="ChEBI" id="CHEBI:29105"/>
    </ligand>
</feature>
<evidence type="ECO:0000255" key="1">
    <source>
        <dbReference type="HAMAP-Rule" id="MF_01395"/>
    </source>
</evidence>
<evidence type="ECO:0000255" key="2">
    <source>
        <dbReference type="PROSITE-ProRule" id="PRU01136"/>
    </source>
</evidence>
<protein>
    <recommendedName>
        <fullName evidence="1">Acetyl-coenzyme A carboxylase carboxyl transferase subunit beta</fullName>
        <shortName evidence="1">ACCase subunit beta</shortName>
        <shortName evidence="1">Acetyl-CoA carboxylase carboxyltransferase subunit beta</shortName>
        <ecNumber evidence="1">2.1.3.15</ecNumber>
    </recommendedName>
</protein>
<comment type="function">
    <text evidence="1">Component of the acetyl coenzyme A carboxylase (ACC) complex. Biotin carboxylase (BC) catalyzes the carboxylation of biotin on its carrier protein (BCCP) and then the CO(2) group is transferred by the transcarboxylase to acetyl-CoA to form malonyl-CoA.</text>
</comment>
<comment type="catalytic activity">
    <reaction evidence="1">
        <text>N(6)-carboxybiotinyl-L-lysyl-[protein] + acetyl-CoA = N(6)-biotinyl-L-lysyl-[protein] + malonyl-CoA</text>
        <dbReference type="Rhea" id="RHEA:54728"/>
        <dbReference type="Rhea" id="RHEA-COMP:10505"/>
        <dbReference type="Rhea" id="RHEA-COMP:10506"/>
        <dbReference type="ChEBI" id="CHEBI:57288"/>
        <dbReference type="ChEBI" id="CHEBI:57384"/>
        <dbReference type="ChEBI" id="CHEBI:83144"/>
        <dbReference type="ChEBI" id="CHEBI:83145"/>
        <dbReference type="EC" id="2.1.3.15"/>
    </reaction>
</comment>
<comment type="cofactor">
    <cofactor evidence="1">
        <name>Zn(2+)</name>
        <dbReference type="ChEBI" id="CHEBI:29105"/>
    </cofactor>
    <text evidence="1">Binds 1 zinc ion per subunit.</text>
</comment>
<comment type="pathway">
    <text evidence="1">Lipid metabolism; malonyl-CoA biosynthesis; malonyl-CoA from acetyl-CoA: step 1/1.</text>
</comment>
<comment type="subunit">
    <text evidence="1">Acetyl-CoA carboxylase is a heterohexamer composed of biotin carboxyl carrier protein (AccB), biotin carboxylase (AccC) and two subunits each of ACCase subunit alpha (AccA) and ACCase subunit beta (AccD).</text>
</comment>
<comment type="subcellular location">
    <subcellularLocation>
        <location evidence="1">Cytoplasm</location>
    </subcellularLocation>
</comment>
<comment type="similarity">
    <text evidence="1">Belongs to the AccD/PCCB family.</text>
</comment>
<reference key="1">
    <citation type="submission" date="2005-08" db="EMBL/GenBank/DDBJ databases">
        <title>Complete sequence of Synechococcus sp. CC9902.</title>
        <authorList>
            <person name="Copeland A."/>
            <person name="Lucas S."/>
            <person name="Lapidus A."/>
            <person name="Barry K."/>
            <person name="Detter J.C."/>
            <person name="Glavina T."/>
            <person name="Hammon N."/>
            <person name="Israni S."/>
            <person name="Pitluck S."/>
            <person name="Martinez M."/>
            <person name="Schmutz J."/>
            <person name="Larimer F."/>
            <person name="Land M."/>
            <person name="Kyrpides N."/>
            <person name="Ivanova N."/>
            <person name="Richardson P."/>
        </authorList>
    </citation>
    <scope>NUCLEOTIDE SEQUENCE [LARGE SCALE GENOMIC DNA]</scope>
    <source>
        <strain>CC9902</strain>
    </source>
</reference>
<keyword id="KW-0067">ATP-binding</keyword>
<keyword id="KW-0963">Cytoplasm</keyword>
<keyword id="KW-0275">Fatty acid biosynthesis</keyword>
<keyword id="KW-0276">Fatty acid metabolism</keyword>
<keyword id="KW-0444">Lipid biosynthesis</keyword>
<keyword id="KW-0443">Lipid metabolism</keyword>
<keyword id="KW-0479">Metal-binding</keyword>
<keyword id="KW-0547">Nucleotide-binding</keyword>
<keyword id="KW-1185">Reference proteome</keyword>
<keyword id="KW-0808">Transferase</keyword>
<keyword id="KW-0862">Zinc</keyword>
<keyword id="KW-0863">Zinc-finger</keyword>
<accession>Q3AYR8</accession>
<organism>
    <name type="scientific">Synechococcus sp. (strain CC9902)</name>
    <dbReference type="NCBI Taxonomy" id="316279"/>
    <lineage>
        <taxon>Bacteria</taxon>
        <taxon>Bacillati</taxon>
        <taxon>Cyanobacteriota</taxon>
        <taxon>Cyanophyceae</taxon>
        <taxon>Synechococcales</taxon>
        <taxon>Synechococcaceae</taxon>
        <taxon>Synechococcus</taxon>
    </lineage>
</organism>
<gene>
    <name evidence="1" type="primary">accD</name>
    <name type="ordered locus">Syncc9902_0793</name>
</gene>
<name>ACCD_SYNS9</name>
<sequence>MSLFDWFADRRKGQYVGNVKQEPEEGDGLWSKCPECGLVVYLKDLRLNASVCAGCGYHHRIDSSERLALIADPESFQPLNEHLAPIDPLGFKDRRAYADRLRESQSATGLNDGVVTGLCRVDGIGMGLAVMDFRFMGGSMGSVVGEKITRLVEECTKRKLPLLIVCASGGARMQEGMLSLMQMAKISGALERHREAELLYLPLLTHPTTGGVTASFAMLGDLILAEPKALIGFAGRRVIEQTLREKLPDNFQTAEYLQDHGFVDTIIPRTQFRSTLASLLRLHGSKSLELTNA</sequence>